<name>SYK_BURM7</name>
<evidence type="ECO:0000255" key="1">
    <source>
        <dbReference type="HAMAP-Rule" id="MF_00252"/>
    </source>
</evidence>
<protein>
    <recommendedName>
        <fullName evidence="1">Lysine--tRNA ligase</fullName>
        <ecNumber evidence="1">6.1.1.6</ecNumber>
    </recommendedName>
    <alternativeName>
        <fullName evidence="1">Lysyl-tRNA synthetase</fullName>
        <shortName evidence="1">LysRS</shortName>
    </alternativeName>
</protein>
<keyword id="KW-0030">Aminoacyl-tRNA synthetase</keyword>
<keyword id="KW-0067">ATP-binding</keyword>
<keyword id="KW-0963">Cytoplasm</keyword>
<keyword id="KW-0436">Ligase</keyword>
<keyword id="KW-0460">Magnesium</keyword>
<keyword id="KW-0479">Metal-binding</keyword>
<keyword id="KW-0547">Nucleotide-binding</keyword>
<keyword id="KW-0648">Protein biosynthesis</keyword>
<dbReference type="EC" id="6.1.1.6" evidence="1"/>
<dbReference type="EMBL" id="CP000548">
    <property type="protein sequence ID" value="ABO05865.1"/>
    <property type="molecule type" value="Genomic_DNA"/>
</dbReference>
<dbReference type="RefSeq" id="WP_004192783.1">
    <property type="nucleotide sequence ID" value="NZ_CP007802.1"/>
</dbReference>
<dbReference type="SMR" id="A3ML91"/>
<dbReference type="GeneID" id="93060838"/>
<dbReference type="KEGG" id="bmaz:BM44_1670"/>
<dbReference type="KEGG" id="bmn:BMA10247_1480"/>
<dbReference type="PATRIC" id="fig|320389.8.peg.1867"/>
<dbReference type="GO" id="GO:0005829">
    <property type="term" value="C:cytosol"/>
    <property type="evidence" value="ECO:0007669"/>
    <property type="project" value="TreeGrafter"/>
</dbReference>
<dbReference type="GO" id="GO:0005524">
    <property type="term" value="F:ATP binding"/>
    <property type="evidence" value="ECO:0007669"/>
    <property type="project" value="UniProtKB-UniRule"/>
</dbReference>
<dbReference type="GO" id="GO:0004824">
    <property type="term" value="F:lysine-tRNA ligase activity"/>
    <property type="evidence" value="ECO:0007669"/>
    <property type="project" value="UniProtKB-UniRule"/>
</dbReference>
<dbReference type="GO" id="GO:0000287">
    <property type="term" value="F:magnesium ion binding"/>
    <property type="evidence" value="ECO:0007669"/>
    <property type="project" value="UniProtKB-UniRule"/>
</dbReference>
<dbReference type="GO" id="GO:0000049">
    <property type="term" value="F:tRNA binding"/>
    <property type="evidence" value="ECO:0007669"/>
    <property type="project" value="TreeGrafter"/>
</dbReference>
<dbReference type="GO" id="GO:0006430">
    <property type="term" value="P:lysyl-tRNA aminoacylation"/>
    <property type="evidence" value="ECO:0007669"/>
    <property type="project" value="UniProtKB-UniRule"/>
</dbReference>
<dbReference type="CDD" id="cd00775">
    <property type="entry name" value="LysRS_core"/>
    <property type="match status" value="1"/>
</dbReference>
<dbReference type="CDD" id="cd04322">
    <property type="entry name" value="LysRS_N"/>
    <property type="match status" value="1"/>
</dbReference>
<dbReference type="FunFam" id="2.40.50.140:FF:000024">
    <property type="entry name" value="Lysine--tRNA ligase"/>
    <property type="match status" value="1"/>
</dbReference>
<dbReference type="FunFam" id="3.30.930.10:FF:000001">
    <property type="entry name" value="Lysine--tRNA ligase"/>
    <property type="match status" value="1"/>
</dbReference>
<dbReference type="Gene3D" id="3.30.930.10">
    <property type="entry name" value="Bira Bifunctional Protein, Domain 2"/>
    <property type="match status" value="1"/>
</dbReference>
<dbReference type="Gene3D" id="2.40.50.140">
    <property type="entry name" value="Nucleic acid-binding proteins"/>
    <property type="match status" value="1"/>
</dbReference>
<dbReference type="HAMAP" id="MF_00252">
    <property type="entry name" value="Lys_tRNA_synth_class2"/>
    <property type="match status" value="1"/>
</dbReference>
<dbReference type="InterPro" id="IPR004364">
    <property type="entry name" value="Aa-tRNA-synt_II"/>
</dbReference>
<dbReference type="InterPro" id="IPR006195">
    <property type="entry name" value="aa-tRNA-synth_II"/>
</dbReference>
<dbReference type="InterPro" id="IPR045864">
    <property type="entry name" value="aa-tRNA-synth_II/BPL/LPL"/>
</dbReference>
<dbReference type="InterPro" id="IPR002313">
    <property type="entry name" value="Lys-tRNA-ligase_II"/>
</dbReference>
<dbReference type="InterPro" id="IPR044136">
    <property type="entry name" value="Lys-tRNA-ligase_II_N"/>
</dbReference>
<dbReference type="InterPro" id="IPR018149">
    <property type="entry name" value="Lys-tRNA-synth_II_C"/>
</dbReference>
<dbReference type="InterPro" id="IPR012340">
    <property type="entry name" value="NA-bd_OB-fold"/>
</dbReference>
<dbReference type="InterPro" id="IPR004365">
    <property type="entry name" value="NA-bd_OB_tRNA"/>
</dbReference>
<dbReference type="NCBIfam" id="TIGR00499">
    <property type="entry name" value="lysS_bact"/>
    <property type="match status" value="1"/>
</dbReference>
<dbReference type="NCBIfam" id="NF001756">
    <property type="entry name" value="PRK00484.1"/>
    <property type="match status" value="1"/>
</dbReference>
<dbReference type="PANTHER" id="PTHR42918:SF15">
    <property type="entry name" value="LYSINE--TRNA LIGASE, CHLOROPLASTIC_MITOCHONDRIAL"/>
    <property type="match status" value="1"/>
</dbReference>
<dbReference type="PANTHER" id="PTHR42918">
    <property type="entry name" value="LYSYL-TRNA SYNTHETASE"/>
    <property type="match status" value="1"/>
</dbReference>
<dbReference type="Pfam" id="PF00152">
    <property type="entry name" value="tRNA-synt_2"/>
    <property type="match status" value="1"/>
</dbReference>
<dbReference type="Pfam" id="PF01336">
    <property type="entry name" value="tRNA_anti-codon"/>
    <property type="match status" value="1"/>
</dbReference>
<dbReference type="PRINTS" id="PR00982">
    <property type="entry name" value="TRNASYNTHLYS"/>
</dbReference>
<dbReference type="SUPFAM" id="SSF55681">
    <property type="entry name" value="Class II aaRS and biotin synthetases"/>
    <property type="match status" value="1"/>
</dbReference>
<dbReference type="SUPFAM" id="SSF50249">
    <property type="entry name" value="Nucleic acid-binding proteins"/>
    <property type="match status" value="1"/>
</dbReference>
<dbReference type="PROSITE" id="PS50862">
    <property type="entry name" value="AA_TRNA_LIGASE_II"/>
    <property type="match status" value="1"/>
</dbReference>
<feature type="chain" id="PRO_1000012851" description="Lysine--tRNA ligase">
    <location>
        <begin position="1"/>
        <end position="508"/>
    </location>
</feature>
<feature type="binding site" evidence="1">
    <location>
        <position position="418"/>
    </location>
    <ligand>
        <name>Mg(2+)</name>
        <dbReference type="ChEBI" id="CHEBI:18420"/>
        <label>1</label>
    </ligand>
</feature>
<feature type="binding site" evidence="1">
    <location>
        <position position="425"/>
    </location>
    <ligand>
        <name>Mg(2+)</name>
        <dbReference type="ChEBI" id="CHEBI:18420"/>
        <label>1</label>
    </ligand>
</feature>
<feature type="binding site" evidence="1">
    <location>
        <position position="425"/>
    </location>
    <ligand>
        <name>Mg(2+)</name>
        <dbReference type="ChEBI" id="CHEBI:18420"/>
        <label>2</label>
    </ligand>
</feature>
<comment type="catalytic activity">
    <reaction evidence="1">
        <text>tRNA(Lys) + L-lysine + ATP = L-lysyl-tRNA(Lys) + AMP + diphosphate</text>
        <dbReference type="Rhea" id="RHEA:20792"/>
        <dbReference type="Rhea" id="RHEA-COMP:9696"/>
        <dbReference type="Rhea" id="RHEA-COMP:9697"/>
        <dbReference type="ChEBI" id="CHEBI:30616"/>
        <dbReference type="ChEBI" id="CHEBI:32551"/>
        <dbReference type="ChEBI" id="CHEBI:33019"/>
        <dbReference type="ChEBI" id="CHEBI:78442"/>
        <dbReference type="ChEBI" id="CHEBI:78529"/>
        <dbReference type="ChEBI" id="CHEBI:456215"/>
        <dbReference type="EC" id="6.1.1.6"/>
    </reaction>
</comment>
<comment type="cofactor">
    <cofactor evidence="1">
        <name>Mg(2+)</name>
        <dbReference type="ChEBI" id="CHEBI:18420"/>
    </cofactor>
    <text evidence="1">Binds 3 Mg(2+) ions per subunit.</text>
</comment>
<comment type="subunit">
    <text evidence="1">Homodimer.</text>
</comment>
<comment type="subcellular location">
    <subcellularLocation>
        <location evidence="1">Cytoplasm</location>
    </subcellularLocation>
</comment>
<comment type="similarity">
    <text evidence="1">Belongs to the class-II aminoacyl-tRNA synthetase family.</text>
</comment>
<organism>
    <name type="scientific">Burkholderia mallei (strain NCTC 10247)</name>
    <dbReference type="NCBI Taxonomy" id="320389"/>
    <lineage>
        <taxon>Bacteria</taxon>
        <taxon>Pseudomonadati</taxon>
        <taxon>Pseudomonadota</taxon>
        <taxon>Betaproteobacteria</taxon>
        <taxon>Burkholderiales</taxon>
        <taxon>Burkholderiaceae</taxon>
        <taxon>Burkholderia</taxon>
        <taxon>pseudomallei group</taxon>
    </lineage>
</organism>
<sequence length="508" mass="57202">MTEPTQPQAAVAADENQIVAERRDKLRALRDQGIAYPNDFQPTHHAAGLQTEYADADKEALDAKALDVAVAGRMMLKRVMGKASFATVQDGSGQIQFFVTPADVGAETYDAFKKWDLGDIVAARGVLFRTNKGELSVKCTELRLLAKALRPLPDKFHGLADQETRYRQRYVDLIVTPETRATFRARTKAIASIRKFMSDADFMEVETPMLHPIPGGAAAKPFVTHHNALDMQMFLRIAPELYLKRLIVGGFERVFEINRNFRNEGVSPRHNPEFTMMEFYAAYTDYRWLMDFTERLIRQAAVDALGTATIRYQGRELDLAKPFHRLTITQAIQKYAPNYTDGQLSDDAFLRGELKRLGVDVTQPAFLNAGIGALQLALFEETAEAQLWEPTFIIDYPIEVSPLARESDTVAGITERFELFVTGREIANGFSELNDPEDQAARFRKQVEQKDAGDEEAMFFDADYIRALEYGMPPTGGCGIGIDRLVMLLTDSPTIRDVLLFPHLRRED</sequence>
<gene>
    <name evidence="1" type="primary">lysS</name>
    <name type="ordered locus">BMA10247_1480</name>
</gene>
<reference key="1">
    <citation type="journal article" date="2010" name="Genome Biol. Evol.">
        <title>Continuing evolution of Burkholderia mallei through genome reduction and large-scale rearrangements.</title>
        <authorList>
            <person name="Losada L."/>
            <person name="Ronning C.M."/>
            <person name="DeShazer D."/>
            <person name="Woods D."/>
            <person name="Fedorova N."/>
            <person name="Kim H.S."/>
            <person name="Shabalina S.A."/>
            <person name="Pearson T.R."/>
            <person name="Brinkac L."/>
            <person name="Tan P."/>
            <person name="Nandi T."/>
            <person name="Crabtree J."/>
            <person name="Badger J."/>
            <person name="Beckstrom-Sternberg S."/>
            <person name="Saqib M."/>
            <person name="Schutzer S.E."/>
            <person name="Keim P."/>
            <person name="Nierman W.C."/>
        </authorList>
    </citation>
    <scope>NUCLEOTIDE SEQUENCE [LARGE SCALE GENOMIC DNA]</scope>
    <source>
        <strain>NCTC 10247</strain>
    </source>
</reference>
<accession>A3ML91</accession>
<proteinExistence type="inferred from homology"/>